<name>CBIN_KLEP7</name>
<reference key="1">
    <citation type="submission" date="2006-09" db="EMBL/GenBank/DDBJ databases">
        <authorList>
            <consortium name="The Klebsiella pneumonia Genome Sequencing Project"/>
            <person name="McClelland M."/>
            <person name="Sanderson E.K."/>
            <person name="Spieth J."/>
            <person name="Clifton W.S."/>
            <person name="Latreille P."/>
            <person name="Sabo A."/>
            <person name="Pepin K."/>
            <person name="Bhonagiri V."/>
            <person name="Porwollik S."/>
            <person name="Ali J."/>
            <person name="Wilson R.K."/>
        </authorList>
    </citation>
    <scope>NUCLEOTIDE SEQUENCE [LARGE SCALE GENOMIC DNA]</scope>
    <source>
        <strain>ATCC 700721 / MGH 78578</strain>
    </source>
</reference>
<proteinExistence type="inferred from homology"/>
<comment type="function">
    <text evidence="1">Part of the energy-coupling factor (ECF) transporter complex CbiMNOQ involved in cobalt import.</text>
</comment>
<comment type="pathway">
    <text evidence="1">Cofactor biosynthesis; adenosylcobalamin biosynthesis.</text>
</comment>
<comment type="subunit">
    <text evidence="1">Forms an energy-coupling factor (ECF) transporter complex composed of an ATP-binding protein (A component, CbiO), a transmembrane protein (T component, CbiQ) and 2 possible substrate-capture proteins (S components, CbiM and CbiN) of unknown stoichimetry.</text>
</comment>
<comment type="subcellular location">
    <subcellularLocation>
        <location evidence="1">Cell inner membrane</location>
        <topology evidence="1">Multi-pass membrane protein</topology>
    </subcellularLocation>
</comment>
<comment type="similarity">
    <text evidence="1">Belongs to the CbiN family.</text>
</comment>
<evidence type="ECO:0000255" key="1">
    <source>
        <dbReference type="HAMAP-Rule" id="MF_00330"/>
    </source>
</evidence>
<keyword id="KW-0997">Cell inner membrane</keyword>
<keyword id="KW-1003">Cell membrane</keyword>
<keyword id="KW-0169">Cobalamin biosynthesis</keyword>
<keyword id="KW-0170">Cobalt</keyword>
<keyword id="KW-0171">Cobalt transport</keyword>
<keyword id="KW-0406">Ion transport</keyword>
<keyword id="KW-0472">Membrane</keyword>
<keyword id="KW-0812">Transmembrane</keyword>
<keyword id="KW-1133">Transmembrane helix</keyword>
<keyword id="KW-0813">Transport</keyword>
<accession>A6TDB4</accession>
<dbReference type="EMBL" id="CP000647">
    <property type="protein sequence ID" value="ABR78585.1"/>
    <property type="molecule type" value="Genomic_DNA"/>
</dbReference>
<dbReference type="RefSeq" id="WP_002915619.1">
    <property type="nucleotide sequence ID" value="NC_009648.1"/>
</dbReference>
<dbReference type="STRING" id="272620.KPN_03187"/>
<dbReference type="PaxDb" id="272620-KPN_03187"/>
<dbReference type="EnsemblBacteria" id="ABR78585">
    <property type="protein sequence ID" value="ABR78585"/>
    <property type="gene ID" value="KPN_03187"/>
</dbReference>
<dbReference type="KEGG" id="kpn:KPN_03187"/>
<dbReference type="HOGENOM" id="CLU_136197_2_0_6"/>
<dbReference type="UniPathway" id="UPA00148"/>
<dbReference type="Proteomes" id="UP000000265">
    <property type="component" value="Chromosome"/>
</dbReference>
<dbReference type="GO" id="GO:0005886">
    <property type="term" value="C:plasma membrane"/>
    <property type="evidence" value="ECO:0007669"/>
    <property type="project" value="UniProtKB-SubCell"/>
</dbReference>
<dbReference type="GO" id="GO:0015087">
    <property type="term" value="F:cobalt ion transmembrane transporter activity"/>
    <property type="evidence" value="ECO:0007669"/>
    <property type="project" value="UniProtKB-UniRule"/>
</dbReference>
<dbReference type="GO" id="GO:0009236">
    <property type="term" value="P:cobalamin biosynthetic process"/>
    <property type="evidence" value="ECO:0007669"/>
    <property type="project" value="UniProtKB-UniRule"/>
</dbReference>
<dbReference type="HAMAP" id="MF_00330">
    <property type="entry name" value="CbiN"/>
    <property type="match status" value="1"/>
</dbReference>
<dbReference type="InterPro" id="IPR003705">
    <property type="entry name" value="CbiN"/>
</dbReference>
<dbReference type="NCBIfam" id="TIGR01165">
    <property type="entry name" value="cbiN"/>
    <property type="match status" value="1"/>
</dbReference>
<dbReference type="NCBIfam" id="NF002780">
    <property type="entry name" value="PRK02898.1"/>
    <property type="match status" value="1"/>
</dbReference>
<dbReference type="PANTHER" id="PTHR38662">
    <property type="entry name" value="COBALT TRANSPORT PROTEIN CBIN"/>
    <property type="match status" value="1"/>
</dbReference>
<dbReference type="PANTHER" id="PTHR38662:SF1">
    <property type="entry name" value="COBALT TRANSPORT PROTEIN CBIN"/>
    <property type="match status" value="1"/>
</dbReference>
<dbReference type="Pfam" id="PF02553">
    <property type="entry name" value="CbiN"/>
    <property type="match status" value="1"/>
</dbReference>
<gene>
    <name evidence="1" type="primary">cbiN</name>
    <name type="ordered locus">KPN78578_31240</name>
    <name type="ORF">KPN_03187</name>
</gene>
<protein>
    <recommendedName>
        <fullName evidence="1">Cobalt transport protein CbiN</fullName>
    </recommendedName>
    <alternativeName>
        <fullName evidence="1">Energy-coupling factor transporter probable substrate-capture protein CbiN</fullName>
        <shortName evidence="1">ECF transporter S component CbiN</shortName>
    </alternativeName>
</protein>
<feature type="chain" id="PRO_1000019393" description="Cobalt transport protein CbiN">
    <location>
        <begin position="1"/>
        <end position="93"/>
    </location>
</feature>
<feature type="transmembrane region" description="Helical" evidence="1">
    <location>
        <begin position="5"/>
        <end position="25"/>
    </location>
</feature>
<feature type="transmembrane region" description="Helical" evidence="1">
    <location>
        <begin position="63"/>
        <end position="83"/>
    </location>
</feature>
<organism>
    <name type="scientific">Klebsiella pneumoniae subsp. pneumoniae (strain ATCC 700721 / MGH 78578)</name>
    <dbReference type="NCBI Taxonomy" id="272620"/>
    <lineage>
        <taxon>Bacteria</taxon>
        <taxon>Pseudomonadati</taxon>
        <taxon>Pseudomonadota</taxon>
        <taxon>Gammaproteobacteria</taxon>
        <taxon>Enterobacterales</taxon>
        <taxon>Enterobacteriaceae</taxon>
        <taxon>Klebsiella/Raoultella group</taxon>
        <taxon>Klebsiella</taxon>
        <taxon>Klebsiella pneumoniae complex</taxon>
    </lineage>
</organism>
<sequence length="93" mass="10292">MKKTLILLAMVAALMILPFFINHGGEFGGSDGEAESQIQVVAPDYQPWFQPLYEPASGEIESLLFTLQGSLGAAVIFYILGYARGRQRRDDRV</sequence>